<reference key="1">
    <citation type="journal article" date="2005" name="Science">
        <title>Life at depth: Photobacterium profundum genome sequence and expression analysis.</title>
        <authorList>
            <person name="Vezzi A."/>
            <person name="Campanaro S."/>
            <person name="D'Angelo M."/>
            <person name="Simonato F."/>
            <person name="Vitulo N."/>
            <person name="Lauro F.M."/>
            <person name="Cestaro A."/>
            <person name="Malacrida G."/>
            <person name="Simionati B."/>
            <person name="Cannata N."/>
            <person name="Romualdi C."/>
            <person name="Bartlett D.H."/>
            <person name="Valle G."/>
        </authorList>
    </citation>
    <scope>NUCLEOTIDE SEQUENCE [LARGE SCALE GENOMIC DNA]</scope>
    <source>
        <strain>ATCC BAA-1253 / SS9</strain>
    </source>
</reference>
<feature type="chain" id="PRO_0000112980" description="Ornithine carbamoyltransferase, catabolic">
    <location>
        <begin position="1"/>
        <end position="336"/>
    </location>
</feature>
<feature type="binding site" evidence="2">
    <location>
        <begin position="57"/>
        <end position="60"/>
    </location>
    <ligand>
        <name>carbamoyl phosphate</name>
        <dbReference type="ChEBI" id="CHEBI:58228"/>
    </ligand>
</feature>
<feature type="binding site" evidence="2">
    <location>
        <position position="84"/>
    </location>
    <ligand>
        <name>carbamoyl phosphate</name>
        <dbReference type="ChEBI" id="CHEBI:58228"/>
    </ligand>
</feature>
<feature type="binding site" evidence="2">
    <location>
        <position position="108"/>
    </location>
    <ligand>
        <name>carbamoyl phosphate</name>
        <dbReference type="ChEBI" id="CHEBI:58228"/>
    </ligand>
</feature>
<feature type="binding site" evidence="2">
    <location>
        <begin position="135"/>
        <end position="138"/>
    </location>
    <ligand>
        <name>carbamoyl phosphate</name>
        <dbReference type="ChEBI" id="CHEBI:58228"/>
    </ligand>
</feature>
<feature type="binding site" evidence="2">
    <location>
        <position position="169"/>
    </location>
    <ligand>
        <name>L-ornithine</name>
        <dbReference type="ChEBI" id="CHEBI:46911"/>
    </ligand>
</feature>
<feature type="binding site" evidence="2">
    <location>
        <position position="233"/>
    </location>
    <ligand>
        <name>L-ornithine</name>
        <dbReference type="ChEBI" id="CHEBI:46911"/>
    </ligand>
</feature>
<feature type="binding site" evidence="2">
    <location>
        <begin position="237"/>
        <end position="238"/>
    </location>
    <ligand>
        <name>L-ornithine</name>
        <dbReference type="ChEBI" id="CHEBI:46911"/>
    </ligand>
</feature>
<feature type="binding site" evidence="2">
    <location>
        <begin position="275"/>
        <end position="276"/>
    </location>
    <ligand>
        <name>carbamoyl phosphate</name>
        <dbReference type="ChEBI" id="CHEBI:58228"/>
    </ligand>
</feature>
<feature type="binding site" evidence="2">
    <location>
        <position position="322"/>
    </location>
    <ligand>
        <name>carbamoyl phosphate</name>
        <dbReference type="ChEBI" id="CHEBI:58228"/>
    </ligand>
</feature>
<comment type="function">
    <text evidence="1">Reversibly catalyzes the transfer of the carbamoyl group from carbamoyl phosphate (CP) to the N(epsilon) atom of ornithine (ORN) to produce L-citrulline.</text>
</comment>
<comment type="catalytic activity">
    <reaction evidence="2">
        <text>carbamoyl phosphate + L-ornithine = L-citrulline + phosphate + H(+)</text>
        <dbReference type="Rhea" id="RHEA:19513"/>
        <dbReference type="ChEBI" id="CHEBI:15378"/>
        <dbReference type="ChEBI" id="CHEBI:43474"/>
        <dbReference type="ChEBI" id="CHEBI:46911"/>
        <dbReference type="ChEBI" id="CHEBI:57743"/>
        <dbReference type="ChEBI" id="CHEBI:58228"/>
        <dbReference type="EC" id="2.1.3.3"/>
    </reaction>
</comment>
<comment type="pathway">
    <text evidence="2">Amino-acid degradation; L-arginine degradation via ADI pathway; carbamoyl phosphate from L-arginine: step 2/2.</text>
</comment>
<comment type="subcellular location">
    <subcellularLocation>
        <location evidence="2">Cytoplasm</location>
    </subcellularLocation>
</comment>
<comment type="similarity">
    <text evidence="2">Belongs to the aspartate/ornithine carbamoyltransferase superfamily. OTCase family.</text>
</comment>
<protein>
    <recommendedName>
        <fullName evidence="2">Ornithine carbamoyltransferase, catabolic</fullName>
        <shortName evidence="2">OTCase</shortName>
        <ecNumber evidence="2">2.1.3.3</ecNumber>
    </recommendedName>
</protein>
<proteinExistence type="inferred from homology"/>
<gene>
    <name evidence="2" type="primary">arcB</name>
    <name type="ordered locus">PBPRA0475</name>
</gene>
<keyword id="KW-0056">Arginine metabolism</keyword>
<keyword id="KW-0963">Cytoplasm</keyword>
<keyword id="KW-1185">Reference proteome</keyword>
<keyword id="KW-0808">Transferase</keyword>
<accession>Q6LUW9</accession>
<evidence type="ECO:0000250" key="1"/>
<evidence type="ECO:0000255" key="2">
    <source>
        <dbReference type="HAMAP-Rule" id="MF_01109"/>
    </source>
</evidence>
<sequence length="336" mass="37584">MAFNLRNRNFLKLLDFTPREIQHMLELAAELKKAKYNGYEQPRLKGKNIALIFEKASTRTRCAFEVAAYDQGANVTYLGPSGSQIGYKESMKDTARVLGRMYDGIEYRGFGQEIVETLGAHAGVPVWNGLTDEFHPTQILADFLTMQEHARGKQLSEVTFAYLGDARNNMGNSLMVGAAKMGMDIRLVAPKAFWPEEELVAQCREIAEETGAKITVTEDVQEGVEGCDFLYTDVWVSMGEAKEAWAERISLMMPYQVNMAMLKATGNPHVKFMHCLPAFHGEDTVVGKELAQEYPELKDGVEVTDEVVESKHSIVFDEAENRLHTIKAIMVATLGQ</sequence>
<dbReference type="EC" id="2.1.3.3" evidence="2"/>
<dbReference type="EMBL" id="CR378664">
    <property type="protein sequence ID" value="CAG18906.1"/>
    <property type="molecule type" value="Genomic_DNA"/>
</dbReference>
<dbReference type="RefSeq" id="WP_011217262.1">
    <property type="nucleotide sequence ID" value="NC_006370.1"/>
</dbReference>
<dbReference type="SMR" id="Q6LUW9"/>
<dbReference type="STRING" id="298386.PBPRA0475"/>
<dbReference type="KEGG" id="ppr:PBPRA0475"/>
<dbReference type="eggNOG" id="COG0078">
    <property type="taxonomic scope" value="Bacteria"/>
</dbReference>
<dbReference type="HOGENOM" id="CLU_043846_3_1_6"/>
<dbReference type="UniPathway" id="UPA00254">
    <property type="reaction ID" value="UER00365"/>
</dbReference>
<dbReference type="Proteomes" id="UP000000593">
    <property type="component" value="Chromosome 1"/>
</dbReference>
<dbReference type="GO" id="GO:0005737">
    <property type="term" value="C:cytoplasm"/>
    <property type="evidence" value="ECO:0007669"/>
    <property type="project" value="UniProtKB-SubCell"/>
</dbReference>
<dbReference type="GO" id="GO:0016597">
    <property type="term" value="F:amino acid binding"/>
    <property type="evidence" value="ECO:0007669"/>
    <property type="project" value="InterPro"/>
</dbReference>
<dbReference type="GO" id="GO:0004585">
    <property type="term" value="F:ornithine carbamoyltransferase activity"/>
    <property type="evidence" value="ECO:0007669"/>
    <property type="project" value="UniProtKB-UniRule"/>
</dbReference>
<dbReference type="GO" id="GO:0042450">
    <property type="term" value="P:arginine biosynthetic process via ornithine"/>
    <property type="evidence" value="ECO:0007669"/>
    <property type="project" value="TreeGrafter"/>
</dbReference>
<dbReference type="GO" id="GO:0019547">
    <property type="term" value="P:arginine catabolic process to ornithine"/>
    <property type="evidence" value="ECO:0007669"/>
    <property type="project" value="UniProtKB-UniPathway"/>
</dbReference>
<dbReference type="GO" id="GO:0019240">
    <property type="term" value="P:citrulline biosynthetic process"/>
    <property type="evidence" value="ECO:0007669"/>
    <property type="project" value="TreeGrafter"/>
</dbReference>
<dbReference type="GO" id="GO:0006526">
    <property type="term" value="P:L-arginine biosynthetic process"/>
    <property type="evidence" value="ECO:0007669"/>
    <property type="project" value="UniProtKB-UniRule"/>
</dbReference>
<dbReference type="FunFam" id="3.40.50.1370:FF:000004">
    <property type="entry name" value="Ornithine carbamoyltransferase"/>
    <property type="match status" value="1"/>
</dbReference>
<dbReference type="Gene3D" id="3.40.50.1370">
    <property type="entry name" value="Aspartate/ornithine carbamoyltransferase"/>
    <property type="match status" value="2"/>
</dbReference>
<dbReference type="HAMAP" id="MF_01109">
    <property type="entry name" value="OTCase"/>
    <property type="match status" value="1"/>
</dbReference>
<dbReference type="InterPro" id="IPR006132">
    <property type="entry name" value="Asp/Orn_carbamoyltranf_P-bd"/>
</dbReference>
<dbReference type="InterPro" id="IPR006130">
    <property type="entry name" value="Asp/Orn_carbamoylTrfase"/>
</dbReference>
<dbReference type="InterPro" id="IPR036901">
    <property type="entry name" value="Asp/Orn_carbamoylTrfase_sf"/>
</dbReference>
<dbReference type="InterPro" id="IPR006131">
    <property type="entry name" value="Asp_carbamoyltransf_Asp/Orn-bd"/>
</dbReference>
<dbReference type="InterPro" id="IPR002292">
    <property type="entry name" value="Orn/put_carbamltrans"/>
</dbReference>
<dbReference type="InterPro" id="IPR024904">
    <property type="entry name" value="OTCase_ArgI"/>
</dbReference>
<dbReference type="NCBIfam" id="TIGR00658">
    <property type="entry name" value="orni_carb_tr"/>
    <property type="match status" value="1"/>
</dbReference>
<dbReference type="NCBIfam" id="NF002470">
    <property type="entry name" value="PRK01713.1"/>
    <property type="match status" value="1"/>
</dbReference>
<dbReference type="NCBIfam" id="NF003286">
    <property type="entry name" value="PRK04284.1"/>
    <property type="match status" value="1"/>
</dbReference>
<dbReference type="PANTHER" id="PTHR45753:SF2">
    <property type="entry name" value="ORNITHINE CARBAMOYLTRANSFERASE"/>
    <property type="match status" value="1"/>
</dbReference>
<dbReference type="PANTHER" id="PTHR45753">
    <property type="entry name" value="ORNITHINE CARBAMOYLTRANSFERASE, MITOCHONDRIAL"/>
    <property type="match status" value="1"/>
</dbReference>
<dbReference type="Pfam" id="PF00185">
    <property type="entry name" value="OTCace"/>
    <property type="match status" value="1"/>
</dbReference>
<dbReference type="Pfam" id="PF02729">
    <property type="entry name" value="OTCace_N"/>
    <property type="match status" value="1"/>
</dbReference>
<dbReference type="PRINTS" id="PR00100">
    <property type="entry name" value="AOTCASE"/>
</dbReference>
<dbReference type="PRINTS" id="PR00102">
    <property type="entry name" value="OTCASE"/>
</dbReference>
<dbReference type="SUPFAM" id="SSF53671">
    <property type="entry name" value="Aspartate/ornithine carbamoyltransferase"/>
    <property type="match status" value="1"/>
</dbReference>
<dbReference type="PROSITE" id="PS00097">
    <property type="entry name" value="CARBAMOYLTRANSFERASE"/>
    <property type="match status" value="1"/>
</dbReference>
<organism>
    <name type="scientific">Photobacterium profundum (strain SS9)</name>
    <dbReference type="NCBI Taxonomy" id="298386"/>
    <lineage>
        <taxon>Bacteria</taxon>
        <taxon>Pseudomonadati</taxon>
        <taxon>Pseudomonadota</taxon>
        <taxon>Gammaproteobacteria</taxon>
        <taxon>Vibrionales</taxon>
        <taxon>Vibrionaceae</taxon>
        <taxon>Photobacterium</taxon>
    </lineage>
</organism>
<name>OTCC_PHOPR</name>